<evidence type="ECO:0000255" key="1">
    <source>
        <dbReference type="HAMAP-Rule" id="MF_00117"/>
    </source>
</evidence>
<reference key="1">
    <citation type="journal article" date="2006" name="Lancet">
        <title>Complete genome sequence of USA300, an epidemic clone of community-acquired meticillin-resistant Staphylococcus aureus.</title>
        <authorList>
            <person name="Diep B.A."/>
            <person name="Gill S.R."/>
            <person name="Chang R.F."/>
            <person name="Phan T.H."/>
            <person name="Chen J.H."/>
            <person name="Davidson M.G."/>
            <person name="Lin F."/>
            <person name="Lin J."/>
            <person name="Carleton H.A."/>
            <person name="Mongodin E.F."/>
            <person name="Sensabaugh G.F."/>
            <person name="Perdreau-Remington F."/>
        </authorList>
    </citation>
    <scope>NUCLEOTIDE SEQUENCE [LARGE SCALE GENOMIC DNA]</scope>
    <source>
        <strain>USA300</strain>
    </source>
</reference>
<organism>
    <name type="scientific">Staphylococcus aureus (strain USA300)</name>
    <dbReference type="NCBI Taxonomy" id="367830"/>
    <lineage>
        <taxon>Bacteria</taxon>
        <taxon>Bacillati</taxon>
        <taxon>Bacillota</taxon>
        <taxon>Bacilli</taxon>
        <taxon>Bacillales</taxon>
        <taxon>Staphylococcaceae</taxon>
        <taxon>Staphylococcus</taxon>
    </lineage>
</organism>
<accession>Q2FJC9</accession>
<proteinExistence type="inferred from homology"/>
<comment type="function">
    <text evidence="1">Redox regulated molecular chaperone. Protects both thermally unfolding and oxidatively damaged proteins from irreversible aggregation. Plays an important role in the bacterial defense system toward oxidative stress.</text>
</comment>
<comment type="subcellular location">
    <subcellularLocation>
        <location evidence="1">Cytoplasm</location>
    </subcellularLocation>
</comment>
<comment type="PTM">
    <text evidence="1">Under oxidizing conditions two disulfide bonds are formed involving the reactive cysteines. Under reducing conditions zinc is bound to the reactive cysteines and the protein is inactive.</text>
</comment>
<comment type="similarity">
    <text evidence="1">Belongs to the HSP33 family.</text>
</comment>
<dbReference type="EMBL" id="CP000255">
    <property type="protein sequence ID" value="ABD21640.1"/>
    <property type="molecule type" value="Genomic_DNA"/>
</dbReference>
<dbReference type="RefSeq" id="WP_000148605.1">
    <property type="nucleotide sequence ID" value="NZ_CP027476.1"/>
</dbReference>
<dbReference type="SMR" id="Q2FJC9"/>
<dbReference type="KEGG" id="saa:SAUSA300_0490"/>
<dbReference type="HOGENOM" id="CLU_054493_1_0_9"/>
<dbReference type="OMA" id="DMQCECC"/>
<dbReference type="Proteomes" id="UP000001939">
    <property type="component" value="Chromosome"/>
</dbReference>
<dbReference type="GO" id="GO:0005737">
    <property type="term" value="C:cytoplasm"/>
    <property type="evidence" value="ECO:0007669"/>
    <property type="project" value="UniProtKB-SubCell"/>
</dbReference>
<dbReference type="GO" id="GO:0044183">
    <property type="term" value="F:protein folding chaperone"/>
    <property type="evidence" value="ECO:0007669"/>
    <property type="project" value="TreeGrafter"/>
</dbReference>
<dbReference type="GO" id="GO:0051082">
    <property type="term" value="F:unfolded protein binding"/>
    <property type="evidence" value="ECO:0007669"/>
    <property type="project" value="UniProtKB-UniRule"/>
</dbReference>
<dbReference type="GO" id="GO:0042026">
    <property type="term" value="P:protein refolding"/>
    <property type="evidence" value="ECO:0007669"/>
    <property type="project" value="TreeGrafter"/>
</dbReference>
<dbReference type="CDD" id="cd00498">
    <property type="entry name" value="Hsp33"/>
    <property type="match status" value="1"/>
</dbReference>
<dbReference type="Gene3D" id="3.55.30.10">
    <property type="entry name" value="Hsp33 domain"/>
    <property type="match status" value="1"/>
</dbReference>
<dbReference type="Gene3D" id="3.90.1280.10">
    <property type="entry name" value="HSP33 redox switch-like"/>
    <property type="match status" value="1"/>
</dbReference>
<dbReference type="HAMAP" id="MF_00117">
    <property type="entry name" value="HslO"/>
    <property type="match status" value="1"/>
</dbReference>
<dbReference type="InterPro" id="IPR000397">
    <property type="entry name" value="Heat_shock_Hsp33"/>
</dbReference>
<dbReference type="InterPro" id="IPR016154">
    <property type="entry name" value="Heat_shock_Hsp33_C"/>
</dbReference>
<dbReference type="InterPro" id="IPR016153">
    <property type="entry name" value="Heat_shock_Hsp33_N"/>
</dbReference>
<dbReference type="NCBIfam" id="NF001033">
    <property type="entry name" value="PRK00114.1"/>
    <property type="match status" value="1"/>
</dbReference>
<dbReference type="PANTHER" id="PTHR30111">
    <property type="entry name" value="33 KDA CHAPERONIN"/>
    <property type="match status" value="1"/>
</dbReference>
<dbReference type="PANTHER" id="PTHR30111:SF1">
    <property type="entry name" value="33 KDA CHAPERONIN"/>
    <property type="match status" value="1"/>
</dbReference>
<dbReference type="Pfam" id="PF01430">
    <property type="entry name" value="HSP33"/>
    <property type="match status" value="1"/>
</dbReference>
<dbReference type="PIRSF" id="PIRSF005261">
    <property type="entry name" value="Heat_shock_Hsp33"/>
    <property type="match status" value="1"/>
</dbReference>
<dbReference type="SUPFAM" id="SSF64397">
    <property type="entry name" value="Hsp33 domain"/>
    <property type="match status" value="1"/>
</dbReference>
<dbReference type="SUPFAM" id="SSF118352">
    <property type="entry name" value="HSP33 redox switch-like"/>
    <property type="match status" value="1"/>
</dbReference>
<gene>
    <name evidence="1" type="primary">hslO</name>
    <name type="ordered locus">SAUSA300_0490</name>
</gene>
<keyword id="KW-0143">Chaperone</keyword>
<keyword id="KW-0963">Cytoplasm</keyword>
<keyword id="KW-1015">Disulfide bond</keyword>
<keyword id="KW-0676">Redox-active center</keyword>
<keyword id="KW-0862">Zinc</keyword>
<feature type="chain" id="PRO_0000238094" description="33 kDa chaperonin">
    <location>
        <begin position="1"/>
        <end position="293"/>
    </location>
</feature>
<feature type="disulfide bond" description="Redox-active" evidence="1">
    <location>
        <begin position="238"/>
        <end position="240"/>
    </location>
</feature>
<feature type="disulfide bond" description="Redox-active" evidence="1">
    <location>
        <begin position="271"/>
        <end position="274"/>
    </location>
</feature>
<name>HSLO_STAA3</name>
<protein>
    <recommendedName>
        <fullName evidence="1">33 kDa chaperonin</fullName>
    </recommendedName>
    <alternativeName>
        <fullName evidence="1">Heat shock protein 33 homolog</fullName>
        <shortName evidence="1">HSP33</shortName>
    </alternativeName>
</protein>
<sequence>MTHDYIVKALAFDGEIRAYAALTTETVQEAQTRHYTWPTASAAMGRTMTATAMMGAMLKGDQKLTVTVDGQGPIGRIIADANAKGEVRAYVDHPQTHFPLNEQGKLDVRRAVGTNGSIMVVKDVGMKDYFSGASPIVSGELGEDFTYYYATSEQTPSSVGLGVLVNPDNTIKAAGGFIIQVMPGAKDETISKLEKAISEMTPVSKLIEQGLTPEGLLNEILGEDHVQILEKMPVQFECNCSHEKFLNAIKGLGEAEIQNMIKEDHGAEAVCHFCGNKYKYTEEELNVLLESLA</sequence>